<accession>B3QZ96</accession>
<protein>
    <recommendedName>
        <fullName evidence="1">GTPase Der</fullName>
    </recommendedName>
    <alternativeName>
        <fullName evidence="1">GTP-binding protein EngA</fullName>
    </alternativeName>
</protein>
<reference key="1">
    <citation type="submission" date="2008-06" db="EMBL/GenBank/DDBJ databases">
        <title>Complete sequence of Chloroherpeton thalassium ATCC 35110.</title>
        <authorList>
            <consortium name="US DOE Joint Genome Institute"/>
            <person name="Lucas S."/>
            <person name="Copeland A."/>
            <person name="Lapidus A."/>
            <person name="Glavina del Rio T."/>
            <person name="Dalin E."/>
            <person name="Tice H."/>
            <person name="Bruce D."/>
            <person name="Goodwin L."/>
            <person name="Pitluck S."/>
            <person name="Schmutz J."/>
            <person name="Larimer F."/>
            <person name="Land M."/>
            <person name="Hauser L."/>
            <person name="Kyrpides N."/>
            <person name="Mikhailova N."/>
            <person name="Liu Z."/>
            <person name="Li T."/>
            <person name="Zhao F."/>
            <person name="Overmann J."/>
            <person name="Bryant D.A."/>
            <person name="Richardson P."/>
        </authorList>
    </citation>
    <scope>NUCLEOTIDE SEQUENCE [LARGE SCALE GENOMIC DNA]</scope>
    <source>
        <strain>ATCC 35110 / GB-78</strain>
    </source>
</reference>
<name>DER_CHLT3</name>
<comment type="function">
    <text evidence="1">GTPase that plays an essential role in the late steps of ribosome biogenesis.</text>
</comment>
<comment type="subunit">
    <text evidence="1">Associates with the 50S ribosomal subunit.</text>
</comment>
<comment type="similarity">
    <text evidence="1">Belongs to the TRAFAC class TrmE-Era-EngA-EngB-Septin-like GTPase superfamily. EngA (Der) GTPase family.</text>
</comment>
<organism>
    <name type="scientific">Chloroherpeton thalassium (strain ATCC 35110 / GB-78)</name>
    <dbReference type="NCBI Taxonomy" id="517418"/>
    <lineage>
        <taxon>Bacteria</taxon>
        <taxon>Pseudomonadati</taxon>
        <taxon>Chlorobiota</taxon>
        <taxon>Chlorobiia</taxon>
        <taxon>Chlorobiales</taxon>
        <taxon>Chloroherpetonaceae</taxon>
        <taxon>Chloroherpeton</taxon>
    </lineage>
</organism>
<dbReference type="EMBL" id="CP001100">
    <property type="protein sequence ID" value="ACF13789.1"/>
    <property type="molecule type" value="Genomic_DNA"/>
</dbReference>
<dbReference type="RefSeq" id="WP_012499873.1">
    <property type="nucleotide sequence ID" value="NC_011026.1"/>
</dbReference>
<dbReference type="SMR" id="B3QZ96"/>
<dbReference type="STRING" id="517418.Ctha_1326"/>
<dbReference type="KEGG" id="cts:Ctha_1326"/>
<dbReference type="eggNOG" id="COG1160">
    <property type="taxonomic scope" value="Bacteria"/>
</dbReference>
<dbReference type="HOGENOM" id="CLU_016077_6_2_10"/>
<dbReference type="OrthoDB" id="9805918at2"/>
<dbReference type="Proteomes" id="UP000001208">
    <property type="component" value="Chromosome"/>
</dbReference>
<dbReference type="GO" id="GO:0016887">
    <property type="term" value="F:ATP hydrolysis activity"/>
    <property type="evidence" value="ECO:0007669"/>
    <property type="project" value="InterPro"/>
</dbReference>
<dbReference type="GO" id="GO:0005525">
    <property type="term" value="F:GTP binding"/>
    <property type="evidence" value="ECO:0007669"/>
    <property type="project" value="UniProtKB-UniRule"/>
</dbReference>
<dbReference type="GO" id="GO:0043022">
    <property type="term" value="F:ribosome binding"/>
    <property type="evidence" value="ECO:0007669"/>
    <property type="project" value="TreeGrafter"/>
</dbReference>
<dbReference type="GO" id="GO:0042254">
    <property type="term" value="P:ribosome biogenesis"/>
    <property type="evidence" value="ECO:0007669"/>
    <property type="project" value="UniProtKB-KW"/>
</dbReference>
<dbReference type="CDD" id="cd01894">
    <property type="entry name" value="EngA1"/>
    <property type="match status" value="1"/>
</dbReference>
<dbReference type="CDD" id="cd01895">
    <property type="entry name" value="EngA2"/>
    <property type="match status" value="1"/>
</dbReference>
<dbReference type="FunFam" id="3.30.300.20:FF:000004">
    <property type="entry name" value="GTPase Der"/>
    <property type="match status" value="1"/>
</dbReference>
<dbReference type="FunFam" id="3.40.50.300:FF:000040">
    <property type="entry name" value="GTPase Der"/>
    <property type="match status" value="1"/>
</dbReference>
<dbReference type="FunFam" id="3.40.50.300:FF:000057">
    <property type="entry name" value="GTPase Der"/>
    <property type="match status" value="1"/>
</dbReference>
<dbReference type="Gene3D" id="3.30.300.20">
    <property type="match status" value="1"/>
</dbReference>
<dbReference type="Gene3D" id="3.40.50.300">
    <property type="entry name" value="P-loop containing nucleotide triphosphate hydrolases"/>
    <property type="match status" value="2"/>
</dbReference>
<dbReference type="HAMAP" id="MF_00195">
    <property type="entry name" value="GTPase_Der"/>
    <property type="match status" value="1"/>
</dbReference>
<dbReference type="InterPro" id="IPR003593">
    <property type="entry name" value="AAA+_ATPase"/>
</dbReference>
<dbReference type="InterPro" id="IPR031166">
    <property type="entry name" value="G_ENGA"/>
</dbReference>
<dbReference type="InterPro" id="IPR006073">
    <property type="entry name" value="GTP-bd"/>
</dbReference>
<dbReference type="InterPro" id="IPR016484">
    <property type="entry name" value="GTPase_Der"/>
</dbReference>
<dbReference type="InterPro" id="IPR032859">
    <property type="entry name" value="KH_dom-like"/>
</dbReference>
<dbReference type="InterPro" id="IPR015946">
    <property type="entry name" value="KH_dom-like_a/b"/>
</dbReference>
<dbReference type="InterPro" id="IPR027417">
    <property type="entry name" value="P-loop_NTPase"/>
</dbReference>
<dbReference type="InterPro" id="IPR005225">
    <property type="entry name" value="Small_GTP-bd"/>
</dbReference>
<dbReference type="NCBIfam" id="TIGR03594">
    <property type="entry name" value="GTPase_EngA"/>
    <property type="match status" value="1"/>
</dbReference>
<dbReference type="NCBIfam" id="TIGR00231">
    <property type="entry name" value="small_GTP"/>
    <property type="match status" value="2"/>
</dbReference>
<dbReference type="PANTHER" id="PTHR43834">
    <property type="entry name" value="GTPASE DER"/>
    <property type="match status" value="1"/>
</dbReference>
<dbReference type="PANTHER" id="PTHR43834:SF6">
    <property type="entry name" value="GTPASE DER"/>
    <property type="match status" value="1"/>
</dbReference>
<dbReference type="Pfam" id="PF14714">
    <property type="entry name" value="KH_dom-like"/>
    <property type="match status" value="1"/>
</dbReference>
<dbReference type="Pfam" id="PF01926">
    <property type="entry name" value="MMR_HSR1"/>
    <property type="match status" value="2"/>
</dbReference>
<dbReference type="PIRSF" id="PIRSF006485">
    <property type="entry name" value="GTP-binding_EngA"/>
    <property type="match status" value="1"/>
</dbReference>
<dbReference type="PRINTS" id="PR00326">
    <property type="entry name" value="GTP1OBG"/>
</dbReference>
<dbReference type="SMART" id="SM00382">
    <property type="entry name" value="AAA"/>
    <property type="match status" value="2"/>
</dbReference>
<dbReference type="SUPFAM" id="SSF52540">
    <property type="entry name" value="P-loop containing nucleoside triphosphate hydrolases"/>
    <property type="match status" value="2"/>
</dbReference>
<dbReference type="PROSITE" id="PS51712">
    <property type="entry name" value="G_ENGA"/>
    <property type="match status" value="2"/>
</dbReference>
<proteinExistence type="inferred from homology"/>
<gene>
    <name evidence="1" type="primary">der</name>
    <name type="synonym">engA</name>
    <name type="ordered locus">Ctha_1326</name>
</gene>
<evidence type="ECO:0000255" key="1">
    <source>
        <dbReference type="HAMAP-Rule" id="MF_00195"/>
    </source>
</evidence>
<keyword id="KW-0342">GTP-binding</keyword>
<keyword id="KW-0547">Nucleotide-binding</keyword>
<keyword id="KW-1185">Reference proteome</keyword>
<keyword id="KW-0677">Repeat</keyword>
<keyword id="KW-0690">Ribosome biogenesis</keyword>
<sequence length="435" mass="49026">MKPTVAIVGRPNVGKSTLFNRILNKRVAIVDDVPGVTRDRNFSEAEWCGKQFSLIDTGGYSRTGDTFSAAVLEQSLIALQEANIIILVVDLRTGITDIDLEITELLRKQASEKTVFLAVNKVDNNLMESDAQLFRKLGLSEPYFVSALDGRGVAELLDAVIAHIPEDDAPESDDTVKLTVIGRPNVGKSSFVNAILGQNRQIVTDIPGTTRDAVDSRFKRNGQDFLLIDTAGLRRKAKVDDNIELFSALRTEKAIERCDVAIILLDATQGLENQDLKVINAAAQKKRGMVIAVNKWDLIEKDDKTAIAYEKRLREELRNLSYVPLLFISALTKQRIYKAIDIAYQVWQNRRMKIDTSRLNNLMLNDIKRTPPSSKSGKEIKIKYLTQLATEPPLFGLFAGNPQLIEEHYKRFLERKLREHFGFEGTPIELKFRRK</sequence>
<feature type="chain" id="PRO_1000099105" description="GTPase Der">
    <location>
        <begin position="1"/>
        <end position="435"/>
    </location>
</feature>
<feature type="domain" description="EngA-type G 1">
    <location>
        <begin position="3"/>
        <end position="168"/>
    </location>
</feature>
<feature type="domain" description="EngA-type G 2">
    <location>
        <begin position="176"/>
        <end position="351"/>
    </location>
</feature>
<feature type="domain" description="KH-like" evidence="1">
    <location>
        <begin position="352"/>
        <end position="435"/>
    </location>
</feature>
<feature type="binding site" evidence="1">
    <location>
        <begin position="9"/>
        <end position="16"/>
    </location>
    <ligand>
        <name>GTP</name>
        <dbReference type="ChEBI" id="CHEBI:37565"/>
        <label>1</label>
    </ligand>
</feature>
<feature type="binding site" evidence="1">
    <location>
        <begin position="56"/>
        <end position="60"/>
    </location>
    <ligand>
        <name>GTP</name>
        <dbReference type="ChEBI" id="CHEBI:37565"/>
        <label>1</label>
    </ligand>
</feature>
<feature type="binding site" evidence="1">
    <location>
        <begin position="120"/>
        <end position="123"/>
    </location>
    <ligand>
        <name>GTP</name>
        <dbReference type="ChEBI" id="CHEBI:37565"/>
        <label>1</label>
    </ligand>
</feature>
<feature type="binding site" evidence="1">
    <location>
        <begin position="182"/>
        <end position="189"/>
    </location>
    <ligand>
        <name>GTP</name>
        <dbReference type="ChEBI" id="CHEBI:37565"/>
        <label>2</label>
    </ligand>
</feature>
<feature type="binding site" evidence="1">
    <location>
        <begin position="229"/>
        <end position="233"/>
    </location>
    <ligand>
        <name>GTP</name>
        <dbReference type="ChEBI" id="CHEBI:37565"/>
        <label>2</label>
    </ligand>
</feature>
<feature type="binding site" evidence="1">
    <location>
        <begin position="294"/>
        <end position="297"/>
    </location>
    <ligand>
        <name>GTP</name>
        <dbReference type="ChEBI" id="CHEBI:37565"/>
        <label>2</label>
    </ligand>
</feature>